<comment type="function">
    <text>Core component of nucleosome. Nucleosomes wrap and compact DNA into chromatin, limiting DNA accessibility to the cellular machineries which require DNA as a template. Histones thereby play a central role in transcription regulation, DNA repair, DNA replication and chromosomal stability. DNA accessibility is regulated via a complex set of post-translational modifications of histones, also called histone code, and nucleosome remodeling.</text>
</comment>
<comment type="subunit">
    <text>The nucleosome is a histone octamer containing two molecules each of H2A, H2B, H3 and H4 assembled in one H3-H4 heterotetramer and two H2A-H2B heterodimers. The octamer wraps approximately 147 bp of DNA.</text>
</comment>
<comment type="subcellular location">
    <subcellularLocation>
        <location>Nucleus</location>
    </subcellularLocation>
    <subcellularLocation>
        <location>Chromosome</location>
    </subcellularLocation>
</comment>
<comment type="PTM">
    <text evidence="1">Can be acetylated to form H2BK6ac and H2BK33ac.</text>
</comment>
<comment type="PTM">
    <text evidence="1">Monoubiquitinated to form H2BK143ub1; may give a specific tag for epigenetic transcriptional activation.</text>
</comment>
<comment type="similarity">
    <text evidence="3">Belongs to the histone H2B family.</text>
</comment>
<comment type="caution">
    <text evidence="3">To ensure consistency between histone entries, we follow the 'Brno' nomenclature for histone modifications, with positions referring to those used in the literature for the 'closest' model organism. Due to slight variations in histone sequences between organisms and to the presence of initiator methionine in UniProtKB/Swiss-Prot sequences, the actual positions of modified amino acids in the sequence generally differ. In this entry the following conventions are used: H2BK6ac = acetylated Lys-7; H2BK33ac = acetylated Lys-37; H2BK143ub1 = monoubiquitinated Lys-149.</text>
</comment>
<name>H2B3_MAIZE</name>
<sequence length="153" mass="16492">MAPKADKKPAAKKPAEEEPATEKAEKAPAGKKPKAEKRLPAGKSAGKEGGEGKKGKKKAKKSVETYKIYIFKVLKQVHPDIGISSKAMSIMNSFINDIFEKLAAESAKLARYNKKPTVTSREIQTSVRLVLPGELAKHAVSEGTKAVTKFTSS</sequence>
<evidence type="ECO:0000250" key="1"/>
<evidence type="ECO:0000256" key="2">
    <source>
        <dbReference type="SAM" id="MobiDB-lite"/>
    </source>
</evidence>
<evidence type="ECO:0000305" key="3"/>
<keyword id="KW-0007">Acetylation</keyword>
<keyword id="KW-0158">Chromosome</keyword>
<keyword id="KW-0238">DNA-binding</keyword>
<keyword id="KW-1017">Isopeptide bond</keyword>
<keyword id="KW-0544">Nucleosome core</keyword>
<keyword id="KW-0539">Nucleus</keyword>
<keyword id="KW-1185">Reference proteome</keyword>
<keyword id="KW-0832">Ubl conjugation</keyword>
<protein>
    <recommendedName>
        <fullName>Histone H2B.3</fullName>
    </recommendedName>
</protein>
<accession>Q43261</accession>
<feature type="initiator methionine" description="Removed" evidence="1">
    <location>
        <position position="1"/>
    </location>
</feature>
<feature type="chain" id="PRO_0000071917" description="Histone H2B.3">
    <location>
        <begin position="2"/>
        <end position="153"/>
    </location>
</feature>
<feature type="region of interest" description="Disordered" evidence="2">
    <location>
        <begin position="1"/>
        <end position="60"/>
    </location>
</feature>
<feature type="compositionally biased region" description="Basic and acidic residues" evidence="2">
    <location>
        <begin position="1"/>
        <end position="28"/>
    </location>
</feature>
<feature type="modified residue" description="N6-acetyllysine" evidence="1">
    <location>
        <position position="7"/>
    </location>
</feature>
<feature type="modified residue" description="N6-acetyllysine" evidence="1">
    <location>
        <position position="37"/>
    </location>
</feature>
<feature type="cross-link" description="Glycyl lysine isopeptide (Lys-Gly) (interchain with G-Cter in ubiquitin)" evidence="1">
    <location>
        <position position="149"/>
    </location>
</feature>
<organism>
    <name type="scientific">Zea mays</name>
    <name type="common">Maize</name>
    <dbReference type="NCBI Taxonomy" id="4577"/>
    <lineage>
        <taxon>Eukaryota</taxon>
        <taxon>Viridiplantae</taxon>
        <taxon>Streptophyta</taxon>
        <taxon>Embryophyta</taxon>
        <taxon>Tracheophyta</taxon>
        <taxon>Spermatophyta</taxon>
        <taxon>Magnoliopsida</taxon>
        <taxon>Liliopsida</taxon>
        <taxon>Poales</taxon>
        <taxon>Poaceae</taxon>
        <taxon>PACMAD clade</taxon>
        <taxon>Panicoideae</taxon>
        <taxon>Andropogonodae</taxon>
        <taxon>Andropogoneae</taxon>
        <taxon>Tripsacinae</taxon>
        <taxon>Zea</taxon>
    </lineage>
</organism>
<proteinExistence type="inferred from homology"/>
<dbReference type="EMBL" id="X69960">
    <property type="protein sequence ID" value="CAA49584.1"/>
    <property type="molecule type" value="Genomic_DNA"/>
</dbReference>
<dbReference type="SMR" id="Q43261"/>
<dbReference type="STRING" id="4577.Q43261"/>
<dbReference type="eggNOG" id="KOG1744">
    <property type="taxonomic scope" value="Eukaryota"/>
</dbReference>
<dbReference type="InParanoid" id="Q43261"/>
<dbReference type="Proteomes" id="UP000007305">
    <property type="component" value="Unplaced"/>
</dbReference>
<dbReference type="ExpressionAtlas" id="Q43261">
    <property type="expression patterns" value="baseline and differential"/>
</dbReference>
<dbReference type="GO" id="GO:0000786">
    <property type="term" value="C:nucleosome"/>
    <property type="evidence" value="ECO:0007669"/>
    <property type="project" value="UniProtKB-KW"/>
</dbReference>
<dbReference type="GO" id="GO:0005634">
    <property type="term" value="C:nucleus"/>
    <property type="evidence" value="ECO:0007669"/>
    <property type="project" value="UniProtKB-SubCell"/>
</dbReference>
<dbReference type="GO" id="GO:0003677">
    <property type="term" value="F:DNA binding"/>
    <property type="evidence" value="ECO:0000318"/>
    <property type="project" value="GO_Central"/>
</dbReference>
<dbReference type="GO" id="GO:0046982">
    <property type="term" value="F:protein heterodimerization activity"/>
    <property type="evidence" value="ECO:0007669"/>
    <property type="project" value="InterPro"/>
</dbReference>
<dbReference type="GO" id="GO:0030527">
    <property type="term" value="F:structural constituent of chromatin"/>
    <property type="evidence" value="ECO:0007669"/>
    <property type="project" value="InterPro"/>
</dbReference>
<dbReference type="CDD" id="cd22910">
    <property type="entry name" value="HFD_H2B"/>
    <property type="match status" value="1"/>
</dbReference>
<dbReference type="FunFam" id="1.10.20.10:FF:000014">
    <property type="entry name" value="Histone H2B"/>
    <property type="match status" value="1"/>
</dbReference>
<dbReference type="Gene3D" id="1.10.20.10">
    <property type="entry name" value="Histone, subunit A"/>
    <property type="match status" value="1"/>
</dbReference>
<dbReference type="InterPro" id="IPR009072">
    <property type="entry name" value="Histone-fold"/>
</dbReference>
<dbReference type="InterPro" id="IPR007125">
    <property type="entry name" value="Histone_H2A/H2B/H3"/>
</dbReference>
<dbReference type="InterPro" id="IPR000558">
    <property type="entry name" value="Histone_H2B"/>
</dbReference>
<dbReference type="InterPro" id="IPR055333">
    <property type="entry name" value="HISTONE_H2B_site"/>
</dbReference>
<dbReference type="PANTHER" id="PTHR23428">
    <property type="entry name" value="HISTONE H2B"/>
    <property type="match status" value="1"/>
</dbReference>
<dbReference type="Pfam" id="PF00125">
    <property type="entry name" value="Histone"/>
    <property type="match status" value="1"/>
</dbReference>
<dbReference type="PRINTS" id="PR00621">
    <property type="entry name" value="HISTONEH2B"/>
</dbReference>
<dbReference type="SMART" id="SM00427">
    <property type="entry name" value="H2B"/>
    <property type="match status" value="1"/>
</dbReference>
<dbReference type="SUPFAM" id="SSF47113">
    <property type="entry name" value="Histone-fold"/>
    <property type="match status" value="1"/>
</dbReference>
<dbReference type="PROSITE" id="PS00357">
    <property type="entry name" value="HISTONE_H2B"/>
    <property type="match status" value="1"/>
</dbReference>
<reference key="1">
    <citation type="journal article" date="1994" name="Physiol. Veg.">
        <title>Molecular cloning and sequence analysis of two genes encoding two histone H2B variants of maize.</title>
        <authorList>
            <person name="Joanin P."/>
            <person name="Gigot C."/>
            <person name="Phillipps G."/>
        </authorList>
    </citation>
    <scope>NUCLEOTIDE SEQUENCE [GENOMIC DNA]</scope>
    <source>
        <strain>cv. Wisconsin 22</strain>
    </source>
</reference>